<proteinExistence type="inferred from homology"/>
<reference key="1">
    <citation type="submission" date="2009-01" db="EMBL/GenBank/DDBJ databases">
        <title>Complete sequence of chromosome of Methylobacterium nodulans ORS 2060.</title>
        <authorList>
            <consortium name="US DOE Joint Genome Institute"/>
            <person name="Lucas S."/>
            <person name="Copeland A."/>
            <person name="Lapidus A."/>
            <person name="Glavina del Rio T."/>
            <person name="Dalin E."/>
            <person name="Tice H."/>
            <person name="Bruce D."/>
            <person name="Goodwin L."/>
            <person name="Pitluck S."/>
            <person name="Sims D."/>
            <person name="Brettin T."/>
            <person name="Detter J.C."/>
            <person name="Han C."/>
            <person name="Larimer F."/>
            <person name="Land M."/>
            <person name="Hauser L."/>
            <person name="Kyrpides N."/>
            <person name="Ivanova N."/>
            <person name="Marx C.J."/>
            <person name="Richardson P."/>
        </authorList>
    </citation>
    <scope>NUCLEOTIDE SEQUENCE [LARGE SCALE GENOMIC DNA]</scope>
    <source>
        <strain>LMG 21967 / CNCM I-2342 / ORS 2060</strain>
    </source>
</reference>
<dbReference type="EMBL" id="CP001349">
    <property type="protein sequence ID" value="ACL56893.1"/>
    <property type="molecule type" value="Genomic_DNA"/>
</dbReference>
<dbReference type="RefSeq" id="WP_015928584.1">
    <property type="nucleotide sequence ID" value="NC_011894.1"/>
</dbReference>
<dbReference type="SMR" id="B8IS81"/>
<dbReference type="STRING" id="460265.Mnod_1904"/>
<dbReference type="KEGG" id="mno:Mnod_1904"/>
<dbReference type="eggNOG" id="COG0049">
    <property type="taxonomic scope" value="Bacteria"/>
</dbReference>
<dbReference type="HOGENOM" id="CLU_072226_1_1_5"/>
<dbReference type="OrthoDB" id="9807653at2"/>
<dbReference type="Proteomes" id="UP000008207">
    <property type="component" value="Chromosome"/>
</dbReference>
<dbReference type="GO" id="GO:0015935">
    <property type="term" value="C:small ribosomal subunit"/>
    <property type="evidence" value="ECO:0007669"/>
    <property type="project" value="InterPro"/>
</dbReference>
<dbReference type="GO" id="GO:0019843">
    <property type="term" value="F:rRNA binding"/>
    <property type="evidence" value="ECO:0007669"/>
    <property type="project" value="UniProtKB-UniRule"/>
</dbReference>
<dbReference type="GO" id="GO:0003735">
    <property type="term" value="F:structural constituent of ribosome"/>
    <property type="evidence" value="ECO:0007669"/>
    <property type="project" value="InterPro"/>
</dbReference>
<dbReference type="GO" id="GO:0000049">
    <property type="term" value="F:tRNA binding"/>
    <property type="evidence" value="ECO:0007669"/>
    <property type="project" value="UniProtKB-UniRule"/>
</dbReference>
<dbReference type="GO" id="GO:0006412">
    <property type="term" value="P:translation"/>
    <property type="evidence" value="ECO:0007669"/>
    <property type="project" value="UniProtKB-UniRule"/>
</dbReference>
<dbReference type="CDD" id="cd14869">
    <property type="entry name" value="uS7_Bacteria"/>
    <property type="match status" value="1"/>
</dbReference>
<dbReference type="FunFam" id="1.10.455.10:FF:000001">
    <property type="entry name" value="30S ribosomal protein S7"/>
    <property type="match status" value="1"/>
</dbReference>
<dbReference type="Gene3D" id="1.10.455.10">
    <property type="entry name" value="Ribosomal protein S7 domain"/>
    <property type="match status" value="1"/>
</dbReference>
<dbReference type="HAMAP" id="MF_00480_B">
    <property type="entry name" value="Ribosomal_uS7_B"/>
    <property type="match status" value="1"/>
</dbReference>
<dbReference type="InterPro" id="IPR000235">
    <property type="entry name" value="Ribosomal_uS7"/>
</dbReference>
<dbReference type="InterPro" id="IPR005717">
    <property type="entry name" value="Ribosomal_uS7_bac/org-type"/>
</dbReference>
<dbReference type="InterPro" id="IPR020606">
    <property type="entry name" value="Ribosomal_uS7_CS"/>
</dbReference>
<dbReference type="InterPro" id="IPR023798">
    <property type="entry name" value="Ribosomal_uS7_dom"/>
</dbReference>
<dbReference type="InterPro" id="IPR036823">
    <property type="entry name" value="Ribosomal_uS7_dom_sf"/>
</dbReference>
<dbReference type="NCBIfam" id="TIGR01029">
    <property type="entry name" value="rpsG_bact"/>
    <property type="match status" value="1"/>
</dbReference>
<dbReference type="PANTHER" id="PTHR11205">
    <property type="entry name" value="RIBOSOMAL PROTEIN S7"/>
    <property type="match status" value="1"/>
</dbReference>
<dbReference type="Pfam" id="PF00177">
    <property type="entry name" value="Ribosomal_S7"/>
    <property type="match status" value="1"/>
</dbReference>
<dbReference type="PIRSF" id="PIRSF002122">
    <property type="entry name" value="RPS7p_RPS7a_RPS5e_RPS7o"/>
    <property type="match status" value="1"/>
</dbReference>
<dbReference type="SUPFAM" id="SSF47973">
    <property type="entry name" value="Ribosomal protein S7"/>
    <property type="match status" value="1"/>
</dbReference>
<dbReference type="PROSITE" id="PS00052">
    <property type="entry name" value="RIBOSOMAL_S7"/>
    <property type="match status" value="1"/>
</dbReference>
<comment type="function">
    <text evidence="1">One of the primary rRNA binding proteins, it binds directly to 16S rRNA where it nucleates assembly of the head domain of the 30S subunit. Is located at the subunit interface close to the decoding center, probably blocks exit of the E-site tRNA.</text>
</comment>
<comment type="subunit">
    <text evidence="1">Part of the 30S ribosomal subunit. Contacts proteins S9 and S11.</text>
</comment>
<comment type="similarity">
    <text evidence="1">Belongs to the universal ribosomal protein uS7 family.</text>
</comment>
<accession>B8IS81</accession>
<sequence>MSRRHSAEKRQIIPDAKYGDVVLTKFMNSVMYEGKKSVAESIVYGAFDIIESRARVNPIEVFRAALDNVAPAIEVRSRRVGGATYQVPVEVRHERRQALAIRWLIQAARSRNDRTMVERLSAELLDAANNRGAAVKKREDTHRMAEANRAFSHYRW</sequence>
<name>RS7_METNO</name>
<feature type="chain" id="PRO_1000135611" description="Small ribosomal subunit protein uS7">
    <location>
        <begin position="1"/>
        <end position="156"/>
    </location>
</feature>
<evidence type="ECO:0000255" key="1">
    <source>
        <dbReference type="HAMAP-Rule" id="MF_00480"/>
    </source>
</evidence>
<evidence type="ECO:0000305" key="2"/>
<gene>
    <name evidence="1" type="primary">rpsG</name>
    <name type="ordered locus">Mnod_1904</name>
</gene>
<protein>
    <recommendedName>
        <fullName evidence="1">Small ribosomal subunit protein uS7</fullName>
    </recommendedName>
    <alternativeName>
        <fullName evidence="2">30S ribosomal protein S7</fullName>
    </alternativeName>
</protein>
<organism>
    <name type="scientific">Methylobacterium nodulans (strain LMG 21967 / CNCM I-2342 / ORS 2060)</name>
    <dbReference type="NCBI Taxonomy" id="460265"/>
    <lineage>
        <taxon>Bacteria</taxon>
        <taxon>Pseudomonadati</taxon>
        <taxon>Pseudomonadota</taxon>
        <taxon>Alphaproteobacteria</taxon>
        <taxon>Hyphomicrobiales</taxon>
        <taxon>Methylobacteriaceae</taxon>
        <taxon>Methylobacterium</taxon>
    </lineage>
</organism>
<keyword id="KW-1185">Reference proteome</keyword>
<keyword id="KW-0687">Ribonucleoprotein</keyword>
<keyword id="KW-0689">Ribosomal protein</keyword>
<keyword id="KW-0694">RNA-binding</keyword>
<keyword id="KW-0699">rRNA-binding</keyword>
<keyword id="KW-0820">tRNA-binding</keyword>